<comment type="function">
    <text evidence="5">Sodium- and chloride-dependent glycine transporter which is essential for regulating glycine concentrations at inhibitory glycinergic synapses.</text>
</comment>
<comment type="function">
    <molecule>Isoform GlyT-1A</molecule>
    <text evidence="6">Sodium- and chloride-dependent glycine transporter.</text>
</comment>
<comment type="catalytic activity">
    <reaction evidence="5">
        <text>glycine(out) + chloride(out) + 2 Na(+)(out) = glycine(in) + chloride(in) + 2 Na(+)(in)</text>
        <dbReference type="Rhea" id="RHEA:70691"/>
        <dbReference type="ChEBI" id="CHEBI:17996"/>
        <dbReference type="ChEBI" id="CHEBI:29101"/>
        <dbReference type="ChEBI" id="CHEBI:57305"/>
    </reaction>
</comment>
<comment type="catalytic activity">
    <molecule>Isoform GlyT-1A</molecule>
    <reaction evidence="6">
        <text>glycine(out) + chloride(out) + 2 Na(+)(out) = glycine(in) + chloride(in) + 2 Na(+)(in)</text>
        <dbReference type="Rhea" id="RHEA:70691"/>
        <dbReference type="ChEBI" id="CHEBI:17996"/>
        <dbReference type="ChEBI" id="CHEBI:29101"/>
        <dbReference type="ChEBI" id="CHEBI:57305"/>
    </reaction>
</comment>
<comment type="biophysicochemical properties">
    <molecule>Isoform GlyT-1A</molecule>
    <kinetics>
        <KM evidence="6">20 uM for glycine</KM>
    </kinetics>
</comment>
<comment type="subunit">
    <text evidence="1">Interacts with EXOC1; interaction increases the transporter capacity of SLC6A9 probably by promoting its insertion into the cell membrane (By similarity). Interacts with EXOC3 and EXOC4 (By similarity).</text>
</comment>
<comment type="subcellular location">
    <subcellularLocation>
        <location evidence="1">Cell membrane</location>
        <topology evidence="3">Multi-pass membrane protein</topology>
    </subcellularLocation>
</comment>
<comment type="alternative products">
    <event type="alternative promoter"/>
    <event type="alternative splicing"/>
    <isoform>
        <id>P28571-3</id>
        <name>GlyT-1C</name>
        <name>GLYT1c</name>
        <sequence type="displayed"/>
    </isoform>
    <isoform>
        <id>P28571-1</id>
        <name>GlyT-1A</name>
        <name>GLYT1a</name>
        <sequence type="described" ref="VSP_006272"/>
    </isoform>
    <isoform>
        <id>P28571-2</id>
        <name>GlyT-1B</name>
        <name>GLYT1b</name>
        <sequence type="described" ref="VSP_039241"/>
    </isoform>
</comment>
<comment type="tissue specificity">
    <text evidence="7 8 9">Expressed in the brain (at protein level) (PubMed:27773429). At 11 dpc, expressed in the ventral part of the ventricular zone. At 15 dpc, also expressed in adjacent mantle tissue and the meninges. Strongly expressed in 12 dpc and 15 dpc liver.</text>
</comment>
<comment type="tissue specificity">
    <molecule>Isoform GlyT-1A</molecule>
    <text evidence="6">Expressed in the brain.</text>
</comment>
<comment type="developmental stage">
    <text evidence="8">Expression is present at low levels as early as 9 dpc and 10 dpc, but strongly increases at 13 dpc and remains at high levels up to 15 dpc. Also expressed in adult.</text>
</comment>
<comment type="disruption phenotype">
    <text evidence="5">Mice show severe motor and respiration deficits at birth and die during the first postnatal day (PubMed:14622582). Accumulation of glycine in the synaptic cleft results in over-activation of postsynaptic glycine receptors and death of the newborn animals due to respiratory and feeding problem (PubMed:14622582).</text>
</comment>
<comment type="miscellaneous">
    <molecule>Isoform GlyT-1C</molecule>
    <text>Produced by alternative promoter usage.</text>
</comment>
<comment type="miscellaneous">
    <molecule>Isoform GlyT-1A</molecule>
    <text evidence="13">Produced by alternative promoter usage.</text>
</comment>
<comment type="miscellaneous">
    <molecule>Isoform GlyT-1B</molecule>
    <text evidence="13">Produced by alternative splicing of isoform GlyT-1C.</text>
</comment>
<comment type="similarity">
    <text evidence="13">Belongs to the sodium:neurotransmitter symporter (SNF) (TC 2.A.22) family. SLC6A9 subfamily.</text>
</comment>
<reference key="1">
    <citation type="journal article" date="1992" name="FEBS Lett.">
        <title>Cloning and expression of a glycine transporter from mouse brain.</title>
        <authorList>
            <person name="Liu Q.-R."/>
            <person name="Nelson H."/>
            <person name="Mandiyan S."/>
            <person name="Lopez-Corcuera B."/>
            <person name="Nelson N."/>
        </authorList>
    </citation>
    <scope>NUCLEOTIDE SEQUENCE [MRNA] (ISOFORM GLYT-1A)</scope>
    <scope>FUNCTION (ISOFORM GLYT-1A)</scope>
    <scope>TRANSPORTER ACTIVITY (ISOFORM GLYT-1A)</scope>
    <scope>TISSUE SPECIFICITY (ISOFORM GLYT-1A)</scope>
    <scope>BIOPHYSICOCHEMICAL PROPERTIES (ISOFORM GLYT-1A)</scope>
    <source>
        <tissue>Brain</tissue>
    </source>
</reference>
<reference key="2">
    <citation type="journal article" date="1995" name="J. Neurosci.">
        <title>Gene structure and glial expression of the glycine transporter GlyT1 in embryonic and adult rodents.</title>
        <authorList>
            <person name="Adams R.H."/>
            <person name="Sato K."/>
            <person name="Shimada S."/>
            <person name="Tohyama M."/>
            <person name="Puschel A.W."/>
            <person name="Betz H."/>
        </authorList>
    </citation>
    <scope>NUCLEOTIDE SEQUENCE [GENOMIC DNA] (ISOFORMS GLYT-1A; GLYT-1B AND GLYT-1C)</scope>
    <scope>TISSUE SPECIFICITY</scope>
    <scope>DEVELOPMENTAL STAGE</scope>
    <scope>ALTERNATIVE PROMOTER USAGE</scope>
    <scope>ALTERNATIVE SPLICING</scope>
    <source>
        <strain>NMRI</strain>
    </source>
</reference>
<reference key="3">
    <citation type="journal article" date="2009" name="PLoS Biol.">
        <title>Lineage-specific biology revealed by a finished genome assembly of the mouse.</title>
        <authorList>
            <person name="Church D.M."/>
            <person name="Goodstadt L."/>
            <person name="Hillier L.W."/>
            <person name="Zody M.C."/>
            <person name="Goldstein S."/>
            <person name="She X."/>
            <person name="Bult C.J."/>
            <person name="Agarwala R."/>
            <person name="Cherry J.L."/>
            <person name="DiCuccio M."/>
            <person name="Hlavina W."/>
            <person name="Kapustin Y."/>
            <person name="Meric P."/>
            <person name="Maglott D."/>
            <person name="Birtle Z."/>
            <person name="Marques A.C."/>
            <person name="Graves T."/>
            <person name="Zhou S."/>
            <person name="Teague B."/>
            <person name="Potamousis K."/>
            <person name="Churas C."/>
            <person name="Place M."/>
            <person name="Herschleb J."/>
            <person name="Runnheim R."/>
            <person name="Forrest D."/>
            <person name="Amos-Landgraf J."/>
            <person name="Schwartz D.C."/>
            <person name="Cheng Z."/>
            <person name="Lindblad-Toh K."/>
            <person name="Eichler E.E."/>
            <person name="Ponting C.P."/>
        </authorList>
    </citation>
    <scope>NUCLEOTIDE SEQUENCE [LARGE SCALE GENOMIC DNA]</scope>
    <source>
        <strain>C57BL/6J</strain>
    </source>
</reference>
<reference key="4">
    <citation type="journal article" date="2004" name="Genome Res.">
        <title>The status, quality, and expansion of the NIH full-length cDNA project: the Mammalian Gene Collection (MGC).</title>
        <authorList>
            <consortium name="The MGC Project Team"/>
        </authorList>
    </citation>
    <scope>NUCLEOTIDE SEQUENCE [LARGE SCALE MRNA] (ISOFORM GLYT-1A)</scope>
    <source>
        <strain>FVB/N</strain>
        <tissue>Liver</tissue>
    </source>
</reference>
<reference key="5">
    <citation type="journal article" date="1993" name="J. Biol. Chem.">
        <title>Cloning and expression of a spinal cord- and brain-specific glycine transporter with novel structural features.</title>
        <authorList>
            <person name="Liu Q.-R."/>
            <person name="Lopez-Corcuera B."/>
            <person name="Mandiyan S."/>
            <person name="Nelson H."/>
            <person name="Nelson N."/>
        </authorList>
    </citation>
    <scope>NUCLEOTIDE SEQUENCE [MRNA] OF 1-117 (ISOFORMS GLYT-1A AND GLYT-1B)</scope>
    <scope>TISSUE SPECIFICITY</scope>
    <source>
        <tissue>Brain</tissue>
    </source>
</reference>
<reference key="6">
    <citation type="journal article" date="2003" name="Neuron">
        <title>Inactivation of the glycine transporter 1 gene discloses vital role of glial glycine uptake in glycinergic inhibition.</title>
        <authorList>
            <person name="Gomeza J."/>
            <person name="Huelsmann S."/>
            <person name="Ohno K."/>
            <person name="Eulenburg V."/>
            <person name="Szoeke K."/>
            <person name="Richter D."/>
            <person name="Betz H."/>
        </authorList>
    </citation>
    <scope>FUNCTION</scope>
    <scope>TRANSPORTER ACTIVITY</scope>
    <scope>DISRUPTION PHENOTYPE</scope>
</reference>
<reference key="7">
    <citation type="journal article" date="2010" name="Cell">
        <title>A tissue-specific atlas of mouse protein phosphorylation and expression.</title>
        <authorList>
            <person name="Huttlin E.L."/>
            <person name="Jedrychowski M.P."/>
            <person name="Elias J.E."/>
            <person name="Goswami T."/>
            <person name="Rad R."/>
            <person name="Beausoleil S.A."/>
            <person name="Villen J."/>
            <person name="Haas W."/>
            <person name="Sowa M.E."/>
            <person name="Gygi S.P."/>
        </authorList>
    </citation>
    <scope>PHOSPHORYLATION [LARGE SCALE ANALYSIS] AT THR-657 AND SER-659</scope>
    <scope>IDENTIFICATION BY MASS SPECTROMETRY [LARGE SCALE ANALYSIS]</scope>
    <source>
        <tissue>Brain</tissue>
    </source>
</reference>
<reference key="8">
    <citation type="journal article" date="2016" name="Am. J. Hum. Genet.">
        <title>Loss of Glycine Transporter 1 Causes a Subtype of Glycine Encephalopathy with Arthrogryposis and Mildly Elevated Cerebrospinal Fluid Glycine.</title>
        <authorList>
            <person name="Kurolap A."/>
            <person name="Armbruster A."/>
            <person name="Hershkovitz T."/>
            <person name="Hauf K."/>
            <person name="Mory A."/>
            <person name="Paperna T."/>
            <person name="Hannappel E."/>
            <person name="Tal G."/>
            <person name="Nijem Y."/>
            <person name="Sella E."/>
            <person name="Mahajnah M."/>
            <person name="Ilivitzki A."/>
            <person name="Hershkovitz D."/>
            <person name="Ekhilevitch N."/>
            <person name="Mandel H."/>
            <person name="Eulenburg V."/>
            <person name="Baris H.N."/>
        </authorList>
    </citation>
    <scope>TISSUE SPECIFICITY</scope>
</reference>
<evidence type="ECO:0000250" key="1">
    <source>
        <dbReference type="UniProtKB" id="P28572"/>
    </source>
</evidence>
<evidence type="ECO:0000250" key="2">
    <source>
        <dbReference type="UniProtKB" id="P48067"/>
    </source>
</evidence>
<evidence type="ECO:0000255" key="3"/>
<evidence type="ECO:0000256" key="4">
    <source>
        <dbReference type="SAM" id="MobiDB-lite"/>
    </source>
</evidence>
<evidence type="ECO:0000269" key="5">
    <source>
    </source>
</evidence>
<evidence type="ECO:0000269" key="6">
    <source>
    </source>
</evidence>
<evidence type="ECO:0000269" key="7">
    <source>
    </source>
</evidence>
<evidence type="ECO:0000269" key="8">
    <source>
    </source>
</evidence>
<evidence type="ECO:0000269" key="9">
    <source>
    </source>
</evidence>
<evidence type="ECO:0000303" key="10">
    <source>
    </source>
</evidence>
<evidence type="ECO:0000303" key="11">
    <source>
    </source>
</evidence>
<evidence type="ECO:0000303" key="12">
    <source>
    </source>
</evidence>
<evidence type="ECO:0000305" key="13"/>
<evidence type="ECO:0007744" key="14">
    <source>
    </source>
</evidence>
<name>SC6A9_MOUSE</name>
<organism>
    <name type="scientific">Mus musculus</name>
    <name type="common">Mouse</name>
    <dbReference type="NCBI Taxonomy" id="10090"/>
    <lineage>
        <taxon>Eukaryota</taxon>
        <taxon>Metazoa</taxon>
        <taxon>Chordata</taxon>
        <taxon>Craniata</taxon>
        <taxon>Vertebrata</taxon>
        <taxon>Euteleostomi</taxon>
        <taxon>Mammalia</taxon>
        <taxon>Eutheria</taxon>
        <taxon>Euarchontoglires</taxon>
        <taxon>Glires</taxon>
        <taxon>Rodentia</taxon>
        <taxon>Myomorpha</taxon>
        <taxon>Muroidea</taxon>
        <taxon>Muridae</taxon>
        <taxon>Murinae</taxon>
        <taxon>Mus</taxon>
        <taxon>Mus</taxon>
    </lineage>
</organism>
<keyword id="KW-0877">Alternative promoter usage</keyword>
<keyword id="KW-0025">Alternative splicing</keyword>
<keyword id="KW-0029">Amino-acid transport</keyword>
<keyword id="KW-1003">Cell membrane</keyword>
<keyword id="KW-0472">Membrane</keyword>
<keyword id="KW-0532">Neurotransmitter transport</keyword>
<keyword id="KW-0597">Phosphoprotein</keyword>
<keyword id="KW-1185">Reference proteome</keyword>
<keyword id="KW-0769">Symport</keyword>
<keyword id="KW-0812">Transmembrane</keyword>
<keyword id="KW-1133">Transmembrane helix</keyword>
<keyword id="KW-0813">Transport</keyword>
<sequence length="692" mass="76544">MIGGDTRAASAHPGMASAQGPVATPSPEQPFPGTTSVSLARPVLRVWHGAHSSGLLPNLIAQHSPAMAQNGAVPSEATKKDQNLTRGNWGNQIEFVLTSVGYAVGLGNVWRFPYLCYRNGGGAFMFPYFIMLIFCGIPLFFMELSFGQFASQGCLGVWRISPMFKGVGYGMMVVSTYIGIYYNVVICIAFYYFFSSMTHVLPWAYCNNPWNTPDCAGVLDASNLTNGSRPAALSGNLSHLFNYTLQRTSPSEEYWRLYVLKLSDDIGNFGEVRLPLLGCLGVSWVVVFLCLIRGVKSSGKVVYFTATFPYVVLTILFVRGVTLEGAFTGIMYYLTPQWDKILEAKVWGDAASQIFYSLGCAWGGLITMASYNKFHNNCYRDSVIISITNCATSVYAGFVIFSILGFMANHLGVDVSRVADHGPGLAFVAYPEALTLLPISPLWSLLFFFMLILLGLGTQFCLLETLVTAIVDEVGNEWILQKKTYVTLGVAVAGFLLGIPLTSQAGIYWLLLMDNYAASFSLVVISCIMCVSIMYIYGHRNYFQDIQMMLGFPPPLFFQICWRFVSPAIIFFILIFTVIQYRPITYNHYQYPGWAVAIGFLMALSSVICIPLYALFQLCRTDGDTLLQRLKNATKPSRDWGPALLEHRTGRYAPTTTPSPEDGFEVQPLHPDKAQIPIVGSNGSSRFQDSRI</sequence>
<feature type="chain" id="PRO_0000214781" description="Sodium- and chloride-dependent glycine transporter 1">
    <location>
        <begin position="1"/>
        <end position="692"/>
    </location>
</feature>
<feature type="topological domain" description="Cytoplasmic" evidence="3">
    <location>
        <begin position="1"/>
        <end position="94"/>
    </location>
</feature>
<feature type="transmembrane region" description="Helical; Name=1" evidence="3">
    <location>
        <begin position="95"/>
        <end position="115"/>
    </location>
</feature>
<feature type="transmembrane region" description="Helical; Name=2" evidence="3">
    <location>
        <begin position="122"/>
        <end position="142"/>
    </location>
</feature>
<feature type="transmembrane region" description="Helical; Name=3" evidence="3">
    <location>
        <begin position="174"/>
        <end position="194"/>
    </location>
</feature>
<feature type="topological domain" description="Extracellular" evidence="3">
    <location>
        <begin position="195"/>
        <end position="271"/>
    </location>
</feature>
<feature type="transmembrane region" description="Helical; Name=4" evidence="3">
    <location>
        <begin position="272"/>
        <end position="292"/>
    </location>
</feature>
<feature type="transmembrane region" description="Helical; Name=5" evidence="3">
    <location>
        <begin position="301"/>
        <end position="321"/>
    </location>
</feature>
<feature type="transmembrane region" description="Helical; Name=6" evidence="3">
    <location>
        <begin position="346"/>
        <end position="366"/>
    </location>
</feature>
<feature type="transmembrane region" description="Helical; Name=7" evidence="3">
    <location>
        <begin position="393"/>
        <end position="413"/>
    </location>
</feature>
<feature type="transmembrane region" description="Helical; Name=8" evidence="3">
    <location>
        <begin position="436"/>
        <end position="456"/>
    </location>
</feature>
<feature type="transmembrane region" description="Helical; Name=9" evidence="3">
    <location>
        <begin position="492"/>
        <end position="512"/>
    </location>
</feature>
<feature type="transmembrane region" description="Helical; Name=10" evidence="3">
    <location>
        <begin position="516"/>
        <end position="536"/>
    </location>
</feature>
<feature type="transmembrane region" description="Helical; Name=11" evidence="3">
    <location>
        <begin position="556"/>
        <end position="576"/>
    </location>
</feature>
<feature type="transmembrane region" description="Helical; Name=12" evidence="3">
    <location>
        <begin position="596"/>
        <end position="616"/>
    </location>
</feature>
<feature type="topological domain" description="Cytoplasmic" evidence="3">
    <location>
        <begin position="617"/>
        <end position="692"/>
    </location>
</feature>
<feature type="region of interest" description="Disordered" evidence="4">
    <location>
        <begin position="1"/>
        <end position="34"/>
    </location>
</feature>
<feature type="region of interest" description="Essential for interaction with EXOC1" evidence="1">
    <location>
        <begin position="681"/>
        <end position="692"/>
    </location>
</feature>
<feature type="modified residue" description="Phosphothreonine" evidence="14">
    <location>
        <position position="657"/>
    </location>
</feature>
<feature type="modified residue" description="Phosphoserine" evidence="14">
    <location>
        <position position="659"/>
    </location>
</feature>
<feature type="modified residue" description="Phosphoserine" evidence="2">
    <location>
        <position position="684"/>
    </location>
</feature>
<feature type="splice variant" id="VSP_006272" description="In isoform GlyT-1A." evidence="10 11 12">
    <original>MIGGDTRAASAHPGMASAQGPVATPSPEQPFPGTTSVSLARPVLRVWHGAHSSGLLPNLIAQHSPAMAQ</original>
    <variation>MVGKGAKGML</variation>
    <location>
        <begin position="1"/>
        <end position="69"/>
    </location>
</feature>
<feature type="splice variant" id="VSP_039241" description="In isoform GlyT-1B." evidence="12">
    <location>
        <begin position="29"/>
        <end position="69"/>
    </location>
</feature>
<feature type="sequence conflict" description="In Ref. 1; CAA47440 and 2; X82570." evidence="13" ref="1 2">
    <original>I</original>
    <variation>Y</variation>
    <location>
        <position position="341"/>
    </location>
</feature>
<feature type="sequence conflict" description="In Ref. 1; CAA47440." evidence="13" ref="1">
    <original>SV</original>
    <variation>RL</variation>
    <location>
        <begin position="393"/>
        <end position="394"/>
    </location>
</feature>
<feature type="sequence conflict" description="In Ref. 1; CAA47440 and 2; X82571." evidence="13" ref="1 2">
    <original>A</original>
    <variation>R</variation>
    <location>
        <position position="597"/>
    </location>
</feature>
<accession>P28571</accession>
<accession>B1ASI9</accession>
<accession>Q8VC47</accession>
<gene>
    <name type="primary">Slc6a9</name>
    <name type="synonym">Glyt1</name>
</gene>
<dbReference type="EMBL" id="X67056">
    <property type="protein sequence ID" value="CAA47440.1"/>
    <property type="molecule type" value="mRNA"/>
</dbReference>
<dbReference type="EMBL" id="X82567">
    <property type="status" value="NOT_ANNOTATED_CDS"/>
    <property type="molecule type" value="Genomic_DNA"/>
</dbReference>
<dbReference type="EMBL" id="X82568">
    <property type="status" value="NOT_ANNOTATED_CDS"/>
    <property type="molecule type" value="Genomic_DNA"/>
</dbReference>
<dbReference type="EMBL" id="X82569">
    <property type="status" value="NOT_ANNOTATED_CDS"/>
    <property type="molecule type" value="Genomic_DNA"/>
</dbReference>
<dbReference type="EMBL" id="X82570">
    <property type="status" value="NOT_ANNOTATED_CDS"/>
    <property type="molecule type" value="Genomic_DNA"/>
</dbReference>
<dbReference type="EMBL" id="X82571">
    <property type="status" value="NOT_ANNOTATED_CDS"/>
    <property type="molecule type" value="Genomic_DNA"/>
</dbReference>
<dbReference type="EMBL" id="X82572">
    <property type="status" value="NOT_ANNOTATED_CDS"/>
    <property type="molecule type" value="Genomic_DNA"/>
</dbReference>
<dbReference type="EMBL" id="AL627128">
    <property type="status" value="NOT_ANNOTATED_CDS"/>
    <property type="molecule type" value="Genomic_DNA"/>
</dbReference>
<dbReference type="EMBL" id="BC021828">
    <property type="protein sequence ID" value="AAH21828.1"/>
    <property type="molecule type" value="mRNA"/>
</dbReference>
<dbReference type="CCDS" id="CCDS18538.1">
    <molecule id="P28571-1"/>
</dbReference>
<dbReference type="PIR" id="E46027">
    <property type="entry name" value="E46027"/>
</dbReference>
<dbReference type="PIR" id="S23151">
    <property type="entry name" value="S23151"/>
</dbReference>
<dbReference type="RefSeq" id="NP_001355945.1">
    <molecule id="P28571-1"/>
    <property type="nucleotide sequence ID" value="NM_001369016.1"/>
</dbReference>
<dbReference type="RefSeq" id="NP_032161.2">
    <molecule id="P28571-1"/>
    <property type="nucleotide sequence ID" value="NM_008135.4"/>
</dbReference>
<dbReference type="SMR" id="P28571"/>
<dbReference type="BioGRID" id="199958">
    <property type="interactions" value="3"/>
</dbReference>
<dbReference type="FunCoup" id="P28571">
    <property type="interactions" value="103"/>
</dbReference>
<dbReference type="STRING" id="10090.ENSMUSP00000030269"/>
<dbReference type="BindingDB" id="P28571"/>
<dbReference type="ChEMBL" id="CHEMBL1075303"/>
<dbReference type="GlyGen" id="P28571">
    <property type="glycosylation" value="4 sites, 3 N-linked glycans (3 sites)"/>
</dbReference>
<dbReference type="iPTMnet" id="P28571"/>
<dbReference type="PhosphoSitePlus" id="P28571"/>
<dbReference type="SwissPalm" id="P28571"/>
<dbReference type="PaxDb" id="10090-ENSMUSP00000030269"/>
<dbReference type="ProteomicsDB" id="255352">
    <molecule id="P28571-3"/>
</dbReference>
<dbReference type="ProteomicsDB" id="255353">
    <molecule id="P28571-1"/>
</dbReference>
<dbReference type="ProteomicsDB" id="255354">
    <molecule id="P28571-2"/>
</dbReference>
<dbReference type="Pumba" id="P28571"/>
<dbReference type="Antibodypedia" id="2813">
    <property type="antibodies" value="71 antibodies from 13 providers"/>
</dbReference>
<dbReference type="DNASU" id="14664"/>
<dbReference type="Ensembl" id="ENSMUST00000030269.14">
    <molecule id="P28571-1"/>
    <property type="protein sequence ID" value="ENSMUSP00000030269.8"/>
    <property type="gene ID" value="ENSMUSG00000028542.18"/>
</dbReference>
<dbReference type="Ensembl" id="ENSMUST00000063857.11">
    <molecule id="P28571-1"/>
    <property type="protein sequence ID" value="ENSMUSP00000066102.5"/>
    <property type="gene ID" value="ENSMUSG00000028542.18"/>
</dbReference>
<dbReference type="GeneID" id="14664"/>
<dbReference type="KEGG" id="mmu:14664"/>
<dbReference type="UCSC" id="uc008uiy.1">
    <molecule id="P28571-1"/>
    <property type="organism name" value="mouse"/>
</dbReference>
<dbReference type="AGR" id="MGI:95760"/>
<dbReference type="CTD" id="6536"/>
<dbReference type="MGI" id="MGI:95760">
    <property type="gene designation" value="Slc6a9"/>
</dbReference>
<dbReference type="VEuPathDB" id="HostDB:ENSMUSG00000028542"/>
<dbReference type="eggNOG" id="KOG3660">
    <property type="taxonomic scope" value="Eukaryota"/>
</dbReference>
<dbReference type="GeneTree" id="ENSGT00940000157263"/>
<dbReference type="HOGENOM" id="CLU_006855_9_5_1"/>
<dbReference type="InParanoid" id="P28571"/>
<dbReference type="OMA" id="QHNGVQI"/>
<dbReference type="PhylomeDB" id="P28571"/>
<dbReference type="TreeFam" id="TF343812"/>
<dbReference type="Reactome" id="R-MMU-442660">
    <property type="pathway name" value="Na+/Cl- dependent neurotransmitter transporters"/>
</dbReference>
<dbReference type="BioGRID-ORCS" id="14664">
    <property type="hits" value="2 hits in 78 CRISPR screens"/>
</dbReference>
<dbReference type="ChiTaRS" id="Slc6a9">
    <property type="organism name" value="mouse"/>
</dbReference>
<dbReference type="PRO" id="PR:P28571"/>
<dbReference type="Proteomes" id="UP000000589">
    <property type="component" value="Chromosome 4"/>
</dbReference>
<dbReference type="RNAct" id="P28571">
    <property type="molecule type" value="protein"/>
</dbReference>
<dbReference type="Bgee" id="ENSMUSG00000028542">
    <property type="expression patterns" value="Expressed in retinal neural layer and 241 other cell types or tissues"/>
</dbReference>
<dbReference type="ExpressionAtlas" id="P28571">
    <property type="expression patterns" value="baseline and differential"/>
</dbReference>
<dbReference type="GO" id="GO:0016324">
    <property type="term" value="C:apical plasma membrane"/>
    <property type="evidence" value="ECO:0007669"/>
    <property type="project" value="Ensembl"/>
</dbReference>
<dbReference type="GO" id="GO:0016323">
    <property type="term" value="C:basolateral plasma membrane"/>
    <property type="evidence" value="ECO:0007669"/>
    <property type="project" value="Ensembl"/>
</dbReference>
<dbReference type="GO" id="GO:0031045">
    <property type="term" value="C:dense core granule"/>
    <property type="evidence" value="ECO:0007669"/>
    <property type="project" value="Ensembl"/>
</dbReference>
<dbReference type="GO" id="GO:0005768">
    <property type="term" value="C:endosome"/>
    <property type="evidence" value="ECO:0007669"/>
    <property type="project" value="Ensembl"/>
</dbReference>
<dbReference type="GO" id="GO:0098686">
    <property type="term" value="C:hippocampal mossy fiber to CA3 synapse"/>
    <property type="evidence" value="ECO:0007669"/>
    <property type="project" value="Ensembl"/>
</dbReference>
<dbReference type="GO" id="GO:0016328">
    <property type="term" value="C:lateral plasma membrane"/>
    <property type="evidence" value="ECO:0007669"/>
    <property type="project" value="Ensembl"/>
</dbReference>
<dbReference type="GO" id="GO:0016020">
    <property type="term" value="C:membrane"/>
    <property type="evidence" value="ECO:0000305"/>
    <property type="project" value="MGI"/>
</dbReference>
<dbReference type="GO" id="GO:0098688">
    <property type="term" value="C:parallel fiber to Purkinje cell synapse"/>
    <property type="evidence" value="ECO:0007669"/>
    <property type="project" value="Ensembl"/>
</dbReference>
<dbReference type="GO" id="GO:0005886">
    <property type="term" value="C:plasma membrane"/>
    <property type="evidence" value="ECO:0000314"/>
    <property type="project" value="MGI"/>
</dbReference>
<dbReference type="GO" id="GO:0014069">
    <property type="term" value="C:postsynaptic density"/>
    <property type="evidence" value="ECO:0007669"/>
    <property type="project" value="Ensembl"/>
</dbReference>
<dbReference type="GO" id="GO:0045211">
    <property type="term" value="C:postsynaptic membrane"/>
    <property type="evidence" value="ECO:0007669"/>
    <property type="project" value="Ensembl"/>
</dbReference>
<dbReference type="GO" id="GO:0042734">
    <property type="term" value="C:presynaptic membrane"/>
    <property type="evidence" value="ECO:0007669"/>
    <property type="project" value="Ensembl"/>
</dbReference>
<dbReference type="GO" id="GO:0030672">
    <property type="term" value="C:synaptic vesicle membrane"/>
    <property type="evidence" value="ECO:0007669"/>
    <property type="project" value="Ensembl"/>
</dbReference>
<dbReference type="GO" id="GO:0015187">
    <property type="term" value="F:glycine transmembrane transporter activity"/>
    <property type="evidence" value="ECO:0000314"/>
    <property type="project" value="MGI"/>
</dbReference>
<dbReference type="GO" id="GO:0015375">
    <property type="term" value="F:glycine:sodium symporter activity"/>
    <property type="evidence" value="ECO:0000314"/>
    <property type="project" value="UniProtKB"/>
</dbReference>
<dbReference type="GO" id="GO:1903804">
    <property type="term" value="P:glycine import across plasma membrane"/>
    <property type="evidence" value="ECO:0000315"/>
    <property type="project" value="ARUK-UCL"/>
</dbReference>
<dbReference type="GO" id="GO:0061537">
    <property type="term" value="P:glycine secretion, neurotransmission"/>
    <property type="evidence" value="ECO:0000315"/>
    <property type="project" value="MGI"/>
</dbReference>
<dbReference type="GO" id="GO:0015816">
    <property type="term" value="P:glycine transport"/>
    <property type="evidence" value="ECO:0000314"/>
    <property type="project" value="MGI"/>
</dbReference>
<dbReference type="GO" id="GO:0001504">
    <property type="term" value="P:neurotransmitter uptake"/>
    <property type="evidence" value="ECO:0000314"/>
    <property type="project" value="SynGO"/>
</dbReference>
<dbReference type="GO" id="GO:0070455">
    <property type="term" value="P:positive regulation of heme biosynthetic process"/>
    <property type="evidence" value="ECO:0000315"/>
    <property type="project" value="ARUK-UCL"/>
</dbReference>
<dbReference type="GO" id="GO:0046985">
    <property type="term" value="P:positive regulation of hemoglobin biosynthetic process"/>
    <property type="evidence" value="ECO:0000315"/>
    <property type="project" value="ARUK-UCL"/>
</dbReference>
<dbReference type="GO" id="GO:0060092">
    <property type="term" value="P:regulation of synaptic transmission, glycinergic"/>
    <property type="evidence" value="ECO:0000315"/>
    <property type="project" value="UniProtKB"/>
</dbReference>
<dbReference type="CDD" id="cd11498">
    <property type="entry name" value="SLC6sbd_GlyT1"/>
    <property type="match status" value="1"/>
</dbReference>
<dbReference type="InterPro" id="IPR000175">
    <property type="entry name" value="Na/ntran_symport"/>
</dbReference>
<dbReference type="InterPro" id="IPR003028">
    <property type="entry name" value="Na/ntran_symport_glycine_GLY1"/>
</dbReference>
<dbReference type="InterPro" id="IPR037272">
    <property type="entry name" value="SNS_sf"/>
</dbReference>
<dbReference type="PANTHER" id="PTHR11616:SF263">
    <property type="entry name" value="SODIUM- AND CHLORIDE-DEPENDENT GLYCINE TRANSPORTER 1"/>
    <property type="match status" value="1"/>
</dbReference>
<dbReference type="PANTHER" id="PTHR11616">
    <property type="entry name" value="SODIUM/CHLORIDE DEPENDENT TRANSPORTER"/>
    <property type="match status" value="1"/>
</dbReference>
<dbReference type="Pfam" id="PF00209">
    <property type="entry name" value="SNF"/>
    <property type="match status" value="1"/>
</dbReference>
<dbReference type="PRINTS" id="PR01204">
    <property type="entry name" value="GLY1TRNSPORT"/>
</dbReference>
<dbReference type="PRINTS" id="PR00176">
    <property type="entry name" value="NANEUSMPORT"/>
</dbReference>
<dbReference type="SUPFAM" id="SSF161070">
    <property type="entry name" value="SNF-like"/>
    <property type="match status" value="1"/>
</dbReference>
<dbReference type="PROSITE" id="PS00610">
    <property type="entry name" value="NA_NEUROTRAN_SYMP_1"/>
    <property type="match status" value="1"/>
</dbReference>
<dbReference type="PROSITE" id="PS00754">
    <property type="entry name" value="NA_NEUROTRAN_SYMP_2"/>
    <property type="match status" value="1"/>
</dbReference>
<dbReference type="PROSITE" id="PS50267">
    <property type="entry name" value="NA_NEUROTRAN_SYMP_3"/>
    <property type="match status" value="1"/>
</dbReference>
<protein>
    <recommendedName>
        <fullName>Sodium- and chloride-dependent glycine transporter 1</fullName>
        <shortName>GlyT-1</shortName>
        <shortName>GlyT1</shortName>
    </recommendedName>
    <alternativeName>
        <fullName>Solute carrier family 6 member 9</fullName>
    </alternativeName>
</protein>
<proteinExistence type="evidence at protein level"/>